<accession>Q57354</accession>
<accession>O05008</accession>
<sequence>MNNLELEQLINQKLSSDKINDYAPNGLQVEGKTEIKKIITGVTASQALINYAISQNADAILVHHGYFWKSETPCIRGMKGKRIKALLVNDINLYGYHLPLDVHPELGNNAQLAKLLDIENLQPLEKGSVSIPVWGELKEPMTGKDFAEKIEKVLNRKPLICIENGPHLIRKIGICTGGGQGYIDLAAEQGCDAFITGEVSEQTIHSAREQGLYFFSAGHHATERYGIKALGEWLAKEYGFDVEFKDIDNPA</sequence>
<feature type="chain" id="PRO_0000147310" description="GTP cyclohydrolase 1 type 2 homolog">
    <location>
        <begin position="1"/>
        <end position="251"/>
    </location>
</feature>
<feature type="binding site" evidence="1">
    <location>
        <position position="63"/>
    </location>
    <ligand>
        <name>a divalent metal cation</name>
        <dbReference type="ChEBI" id="CHEBI:60240"/>
        <label>1</label>
    </ligand>
</feature>
<feature type="binding site" evidence="1">
    <location>
        <position position="64"/>
    </location>
    <ligand>
        <name>a divalent metal cation</name>
        <dbReference type="ChEBI" id="CHEBI:60240"/>
        <label>2</label>
    </ligand>
</feature>
<feature type="binding site" evidence="1">
    <location>
        <position position="101"/>
    </location>
    <ligand>
        <name>a divalent metal cation</name>
        <dbReference type="ChEBI" id="CHEBI:60240"/>
        <label>1</label>
    </ligand>
</feature>
<feature type="binding site" evidence="1">
    <location>
        <position position="219"/>
    </location>
    <ligand>
        <name>a divalent metal cation</name>
        <dbReference type="ChEBI" id="CHEBI:60240"/>
        <label>2</label>
    </ligand>
</feature>
<feature type="binding site" evidence="1">
    <location>
        <position position="223"/>
    </location>
    <ligand>
        <name>a divalent metal cation</name>
        <dbReference type="ChEBI" id="CHEBI:60240"/>
        <label>1</label>
    </ligand>
</feature>
<feature type="binding site" evidence="1">
    <location>
        <position position="223"/>
    </location>
    <ligand>
        <name>a divalent metal cation</name>
        <dbReference type="ChEBI" id="CHEBI:60240"/>
        <label>2</label>
    </ligand>
</feature>
<organism>
    <name type="scientific">Haemophilus influenzae (strain ATCC 51907 / DSM 11121 / KW20 / Rd)</name>
    <dbReference type="NCBI Taxonomy" id="71421"/>
    <lineage>
        <taxon>Bacteria</taxon>
        <taxon>Pseudomonadati</taxon>
        <taxon>Pseudomonadota</taxon>
        <taxon>Gammaproteobacteria</taxon>
        <taxon>Pasteurellales</taxon>
        <taxon>Pasteurellaceae</taxon>
        <taxon>Haemophilus</taxon>
    </lineage>
</organism>
<reference key="1">
    <citation type="journal article" date="1995" name="Science">
        <title>Whole-genome random sequencing and assembly of Haemophilus influenzae Rd.</title>
        <authorList>
            <person name="Fleischmann R.D."/>
            <person name="Adams M.D."/>
            <person name="White O."/>
            <person name="Clayton R.A."/>
            <person name="Kirkness E.F."/>
            <person name="Kerlavage A.R."/>
            <person name="Bult C.J."/>
            <person name="Tomb J.-F."/>
            <person name="Dougherty B.A."/>
            <person name="Merrick J.M."/>
            <person name="McKenney K."/>
            <person name="Sutton G.G."/>
            <person name="FitzHugh W."/>
            <person name="Fields C.A."/>
            <person name="Gocayne J.D."/>
            <person name="Scott J.D."/>
            <person name="Shirley R."/>
            <person name="Liu L.-I."/>
            <person name="Glodek A."/>
            <person name="Kelley J.M."/>
            <person name="Weidman J.F."/>
            <person name="Phillips C.A."/>
            <person name="Spriggs T."/>
            <person name="Hedblom E."/>
            <person name="Cotton M.D."/>
            <person name="Utterback T.R."/>
            <person name="Hanna M.C."/>
            <person name="Nguyen D.T."/>
            <person name="Saudek D.M."/>
            <person name="Brandon R.C."/>
            <person name="Fine L.D."/>
            <person name="Fritchman J.L."/>
            <person name="Fuhrmann J.L."/>
            <person name="Geoghagen N.S.M."/>
            <person name="Gnehm C.L."/>
            <person name="McDonald L.A."/>
            <person name="Small K.V."/>
            <person name="Fraser C.M."/>
            <person name="Smith H.O."/>
            <person name="Venter J.C."/>
        </authorList>
    </citation>
    <scope>NUCLEOTIDE SEQUENCE [LARGE SCALE GENOMIC DNA]</scope>
    <source>
        <strain>ATCC 51907 / DSM 11121 / KW20 / Rd</strain>
    </source>
</reference>
<reference key="2">
    <citation type="journal article" date="2000" name="Electrophoresis">
        <title>Two-dimensional map of the proteome of Haemophilus influenzae.</title>
        <authorList>
            <person name="Langen H."/>
            <person name="Takacs B."/>
            <person name="Evers S."/>
            <person name="Berndt P."/>
            <person name="Lahm H.W."/>
            <person name="Wipf B."/>
            <person name="Gray C."/>
            <person name="Fountoulakis M."/>
        </authorList>
    </citation>
    <scope>IDENTIFICATION BY MASS SPECTROMETRY</scope>
    <source>
        <strain>ATCC 51907 / DSM 11121 / KW20 / Rd</strain>
    </source>
</reference>
<keyword id="KW-0479">Metal-binding</keyword>
<keyword id="KW-1185">Reference proteome</keyword>
<evidence type="ECO:0000250" key="1">
    <source>
        <dbReference type="UniProtKB" id="P0AFP6"/>
    </source>
</evidence>
<evidence type="ECO:0000305" key="2"/>
<name>GCH1L_HAEIN</name>
<protein>
    <recommendedName>
        <fullName>GTP cyclohydrolase 1 type 2 homolog</fullName>
    </recommendedName>
</protein>
<dbReference type="EMBL" id="L42023">
    <property type="protein sequence ID" value="AAC21783.1"/>
    <property type="status" value="ALT_INIT"/>
    <property type="molecule type" value="Genomic_DNA"/>
</dbReference>
<dbReference type="PIR" id="G64142">
    <property type="entry name" value="G64142"/>
</dbReference>
<dbReference type="RefSeq" id="NP_438279.2">
    <property type="nucleotide sequence ID" value="NC_000907.1"/>
</dbReference>
<dbReference type="SMR" id="Q57354"/>
<dbReference type="STRING" id="71421.HI_0105"/>
<dbReference type="EnsemblBacteria" id="AAC21783">
    <property type="protein sequence ID" value="AAC21783"/>
    <property type="gene ID" value="HI_0105"/>
</dbReference>
<dbReference type="KEGG" id="hin:HI_0105"/>
<dbReference type="PATRIC" id="fig|71421.8.peg.108"/>
<dbReference type="eggNOG" id="COG0327">
    <property type="taxonomic scope" value="Bacteria"/>
</dbReference>
<dbReference type="HOGENOM" id="CLU_037423_3_0_6"/>
<dbReference type="OrthoDB" id="9800881at2"/>
<dbReference type="PhylomeDB" id="Q57354"/>
<dbReference type="BioCyc" id="HINF71421:G1GJ1-109-MONOMER"/>
<dbReference type="Proteomes" id="UP000000579">
    <property type="component" value="Chromosome"/>
</dbReference>
<dbReference type="GO" id="GO:0005737">
    <property type="term" value="C:cytoplasm"/>
    <property type="evidence" value="ECO:0000318"/>
    <property type="project" value="GO_Central"/>
</dbReference>
<dbReference type="GO" id="GO:0046872">
    <property type="term" value="F:metal ion binding"/>
    <property type="evidence" value="ECO:0007669"/>
    <property type="project" value="UniProtKB-KW"/>
</dbReference>
<dbReference type="FunFam" id="3.40.1390.30:FF:000002">
    <property type="entry name" value="Nif3-like dinuclear metal center protein"/>
    <property type="match status" value="1"/>
</dbReference>
<dbReference type="Gene3D" id="3.40.1390.30">
    <property type="entry name" value="NIF3 (NGG1p interacting factor 3)-like"/>
    <property type="match status" value="2"/>
</dbReference>
<dbReference type="InterPro" id="IPR002678">
    <property type="entry name" value="DUF34/NIF3"/>
</dbReference>
<dbReference type="InterPro" id="IPR036069">
    <property type="entry name" value="DUF34/NIF3_sf"/>
</dbReference>
<dbReference type="NCBIfam" id="TIGR00486">
    <property type="entry name" value="YbgI_SA1388"/>
    <property type="match status" value="1"/>
</dbReference>
<dbReference type="PANTHER" id="PTHR13799:SF14">
    <property type="entry name" value="GTP CYCLOHYDROLASE 1 TYPE 2 HOMOLOG"/>
    <property type="match status" value="1"/>
</dbReference>
<dbReference type="PANTHER" id="PTHR13799">
    <property type="entry name" value="NGG1 INTERACTING FACTOR 3"/>
    <property type="match status" value="1"/>
</dbReference>
<dbReference type="Pfam" id="PF01784">
    <property type="entry name" value="DUF34_NIF3"/>
    <property type="match status" value="1"/>
</dbReference>
<dbReference type="SUPFAM" id="SSF102705">
    <property type="entry name" value="NIF3 (NGG1p interacting factor 3)-like"/>
    <property type="match status" value="1"/>
</dbReference>
<gene>
    <name type="ordered locus">HI_0105</name>
</gene>
<comment type="subunit">
    <text evidence="1">Toroid-shaped homohexamer. In the hexamer, 3 dimers assemble to form a ring-like structure surrounding a central hole.</text>
</comment>
<comment type="similarity">
    <text evidence="2">Belongs to the GTP cyclohydrolase I type 2/NIF3 family.</text>
</comment>
<comment type="sequence caution" evidence="2">
    <conflict type="erroneous initiation">
        <sequence resource="EMBL-CDS" id="AAC21783"/>
    </conflict>
</comment>
<proteinExistence type="evidence at protein level"/>